<evidence type="ECO:0000255" key="1">
    <source>
        <dbReference type="HAMAP-Rule" id="MF_00248"/>
    </source>
</evidence>
<keyword id="KW-0021">Allosteric enzyme</keyword>
<keyword id="KW-0963">Cytoplasm</keyword>
<keyword id="KW-0378">Hydrolase</keyword>
<keyword id="KW-0479">Metal-binding</keyword>
<keyword id="KW-0645">Protease</keyword>
<keyword id="KW-0915">Sodium</keyword>
<keyword id="KW-0346">Stress response</keyword>
<keyword id="KW-0888">Threonine protease</keyword>
<name>HSLV_RHIR8</name>
<comment type="function">
    <text evidence="1">Protease subunit of a proteasome-like degradation complex believed to be a general protein degrading machinery.</text>
</comment>
<comment type="catalytic activity">
    <reaction evidence="1">
        <text>ATP-dependent cleavage of peptide bonds with broad specificity.</text>
        <dbReference type="EC" id="3.4.25.2"/>
    </reaction>
</comment>
<comment type="activity regulation">
    <text evidence="1">Allosterically activated by HslU binding.</text>
</comment>
<comment type="subunit">
    <text evidence="1">A double ring-shaped homohexamer of HslV is capped on each side by a ring-shaped HslU homohexamer. The assembly of the HslU/HslV complex is dependent on binding of ATP.</text>
</comment>
<comment type="subcellular location">
    <subcellularLocation>
        <location evidence="1">Cytoplasm</location>
    </subcellularLocation>
</comment>
<comment type="similarity">
    <text evidence="1">Belongs to the peptidase T1B family. HslV subfamily.</text>
</comment>
<protein>
    <recommendedName>
        <fullName evidence="1">ATP-dependent protease subunit HslV</fullName>
        <ecNumber evidence="1">3.4.25.2</ecNumber>
    </recommendedName>
</protein>
<gene>
    <name evidence="1" type="primary">hslV</name>
    <name type="ordered locus">Arad_0061</name>
</gene>
<proteinExistence type="inferred from homology"/>
<sequence length="175" mass="18633">MTTIVTIRKGGKVVMAGDGQVSLGQTVMKGNARKVRRIGKGDVIAGFAGATADAFTLLERLEKKLEQYPGQLMRAAVELAKDWRTDKYLRNLEAMMLVADKSVTLAITGNGDVLEPEHGALAIGSGGNYALAAARALMDTDKSAEDVARRALDIAADICVYTNHNVVIETLDAEA</sequence>
<accession>B9JG70</accession>
<feature type="chain" id="PRO_1000192662" description="ATP-dependent protease subunit HslV">
    <location>
        <begin position="1"/>
        <end position="175"/>
    </location>
</feature>
<feature type="active site" evidence="1">
    <location>
        <position position="2"/>
    </location>
</feature>
<feature type="binding site" evidence="1">
    <location>
        <position position="156"/>
    </location>
    <ligand>
        <name>Na(+)</name>
        <dbReference type="ChEBI" id="CHEBI:29101"/>
    </ligand>
</feature>
<feature type="binding site" evidence="1">
    <location>
        <position position="159"/>
    </location>
    <ligand>
        <name>Na(+)</name>
        <dbReference type="ChEBI" id="CHEBI:29101"/>
    </ligand>
</feature>
<feature type="binding site" evidence="1">
    <location>
        <position position="162"/>
    </location>
    <ligand>
        <name>Na(+)</name>
        <dbReference type="ChEBI" id="CHEBI:29101"/>
    </ligand>
</feature>
<dbReference type="EC" id="3.4.25.2" evidence="1"/>
<dbReference type="EMBL" id="CP000628">
    <property type="protein sequence ID" value="ACM24853.1"/>
    <property type="molecule type" value="Genomic_DNA"/>
</dbReference>
<dbReference type="RefSeq" id="WP_007698536.1">
    <property type="nucleotide sequence ID" value="NC_011985.1"/>
</dbReference>
<dbReference type="SMR" id="B9JG70"/>
<dbReference type="STRING" id="311403.Arad_0061"/>
<dbReference type="MEROPS" id="T01.006"/>
<dbReference type="GeneID" id="86850456"/>
<dbReference type="KEGG" id="ara:Arad_0061"/>
<dbReference type="eggNOG" id="COG5405">
    <property type="taxonomic scope" value="Bacteria"/>
</dbReference>
<dbReference type="HOGENOM" id="CLU_093872_1_0_5"/>
<dbReference type="Proteomes" id="UP000001600">
    <property type="component" value="Chromosome 1"/>
</dbReference>
<dbReference type="GO" id="GO:0009376">
    <property type="term" value="C:HslUV protease complex"/>
    <property type="evidence" value="ECO:0007669"/>
    <property type="project" value="UniProtKB-UniRule"/>
</dbReference>
<dbReference type="GO" id="GO:0005839">
    <property type="term" value="C:proteasome core complex"/>
    <property type="evidence" value="ECO:0007669"/>
    <property type="project" value="InterPro"/>
</dbReference>
<dbReference type="GO" id="GO:0046872">
    <property type="term" value="F:metal ion binding"/>
    <property type="evidence" value="ECO:0007669"/>
    <property type="project" value="UniProtKB-KW"/>
</dbReference>
<dbReference type="GO" id="GO:0004298">
    <property type="term" value="F:threonine-type endopeptidase activity"/>
    <property type="evidence" value="ECO:0007669"/>
    <property type="project" value="UniProtKB-KW"/>
</dbReference>
<dbReference type="GO" id="GO:0051603">
    <property type="term" value="P:proteolysis involved in protein catabolic process"/>
    <property type="evidence" value="ECO:0007669"/>
    <property type="project" value="InterPro"/>
</dbReference>
<dbReference type="CDD" id="cd01913">
    <property type="entry name" value="protease_HslV"/>
    <property type="match status" value="1"/>
</dbReference>
<dbReference type="FunFam" id="3.60.20.10:FF:000002">
    <property type="entry name" value="ATP-dependent protease subunit HslV"/>
    <property type="match status" value="1"/>
</dbReference>
<dbReference type="Gene3D" id="3.60.20.10">
    <property type="entry name" value="Glutamine Phosphoribosylpyrophosphate, subunit 1, domain 1"/>
    <property type="match status" value="1"/>
</dbReference>
<dbReference type="HAMAP" id="MF_00248">
    <property type="entry name" value="HslV"/>
    <property type="match status" value="1"/>
</dbReference>
<dbReference type="InterPro" id="IPR022281">
    <property type="entry name" value="ATP-dep_Prtase_HsIV_su"/>
</dbReference>
<dbReference type="InterPro" id="IPR029055">
    <property type="entry name" value="Ntn_hydrolases_N"/>
</dbReference>
<dbReference type="InterPro" id="IPR001353">
    <property type="entry name" value="Proteasome_sua/b"/>
</dbReference>
<dbReference type="InterPro" id="IPR023333">
    <property type="entry name" value="Proteasome_suB-type"/>
</dbReference>
<dbReference type="NCBIfam" id="TIGR03692">
    <property type="entry name" value="ATP_dep_HslV"/>
    <property type="match status" value="1"/>
</dbReference>
<dbReference type="NCBIfam" id="NF003964">
    <property type="entry name" value="PRK05456.1"/>
    <property type="match status" value="1"/>
</dbReference>
<dbReference type="PANTHER" id="PTHR32194:SF7">
    <property type="entry name" value="ATP-DEPENDENT PROTEASE SUBUNIT HSLV"/>
    <property type="match status" value="1"/>
</dbReference>
<dbReference type="PANTHER" id="PTHR32194">
    <property type="entry name" value="METALLOPROTEASE TLDD"/>
    <property type="match status" value="1"/>
</dbReference>
<dbReference type="Pfam" id="PF00227">
    <property type="entry name" value="Proteasome"/>
    <property type="match status" value="1"/>
</dbReference>
<dbReference type="PIRSF" id="PIRSF039093">
    <property type="entry name" value="HslV"/>
    <property type="match status" value="1"/>
</dbReference>
<dbReference type="SUPFAM" id="SSF56235">
    <property type="entry name" value="N-terminal nucleophile aminohydrolases (Ntn hydrolases)"/>
    <property type="match status" value="1"/>
</dbReference>
<dbReference type="PROSITE" id="PS51476">
    <property type="entry name" value="PROTEASOME_BETA_2"/>
    <property type="match status" value="1"/>
</dbReference>
<organism>
    <name type="scientific">Rhizobium rhizogenes (strain K84 / ATCC BAA-868)</name>
    <name type="common">Agrobacterium radiobacter</name>
    <dbReference type="NCBI Taxonomy" id="311403"/>
    <lineage>
        <taxon>Bacteria</taxon>
        <taxon>Pseudomonadati</taxon>
        <taxon>Pseudomonadota</taxon>
        <taxon>Alphaproteobacteria</taxon>
        <taxon>Hyphomicrobiales</taxon>
        <taxon>Rhizobiaceae</taxon>
        <taxon>Rhizobium/Agrobacterium group</taxon>
        <taxon>Rhizobium</taxon>
    </lineage>
</organism>
<reference key="1">
    <citation type="journal article" date="2009" name="J. Bacteriol.">
        <title>Genome sequences of three Agrobacterium biovars help elucidate the evolution of multichromosome genomes in bacteria.</title>
        <authorList>
            <person name="Slater S.C."/>
            <person name="Goldman B.S."/>
            <person name="Goodner B."/>
            <person name="Setubal J.C."/>
            <person name="Farrand S.K."/>
            <person name="Nester E.W."/>
            <person name="Burr T.J."/>
            <person name="Banta L."/>
            <person name="Dickerman A.W."/>
            <person name="Paulsen I."/>
            <person name="Otten L."/>
            <person name="Suen G."/>
            <person name="Welch R."/>
            <person name="Almeida N.F."/>
            <person name="Arnold F."/>
            <person name="Burton O.T."/>
            <person name="Du Z."/>
            <person name="Ewing A."/>
            <person name="Godsy E."/>
            <person name="Heisel S."/>
            <person name="Houmiel K.L."/>
            <person name="Jhaveri J."/>
            <person name="Lu J."/>
            <person name="Miller N.M."/>
            <person name="Norton S."/>
            <person name="Chen Q."/>
            <person name="Phoolcharoen W."/>
            <person name="Ohlin V."/>
            <person name="Ondrusek D."/>
            <person name="Pride N."/>
            <person name="Stricklin S.L."/>
            <person name="Sun J."/>
            <person name="Wheeler C."/>
            <person name="Wilson L."/>
            <person name="Zhu H."/>
            <person name="Wood D.W."/>
        </authorList>
    </citation>
    <scope>NUCLEOTIDE SEQUENCE [LARGE SCALE GENOMIC DNA]</scope>
    <source>
        <strain>K84 / ATCC BAA-868</strain>
    </source>
</reference>